<protein>
    <recommendedName>
        <fullName evidence="1">Chaperone protein DnaJ</fullName>
    </recommendedName>
</protein>
<proteinExistence type="inferred from homology"/>
<organism>
    <name type="scientific">Hamiltonella defensa subsp. Acyrthosiphon pisum (strain 5AT)</name>
    <dbReference type="NCBI Taxonomy" id="572265"/>
    <lineage>
        <taxon>Bacteria</taxon>
        <taxon>Pseudomonadati</taxon>
        <taxon>Pseudomonadota</taxon>
        <taxon>Gammaproteobacteria</taxon>
        <taxon>Enterobacterales</taxon>
        <taxon>Enterobacteriaceae</taxon>
        <taxon>aphid secondary symbionts</taxon>
        <taxon>Candidatus Hamiltonella</taxon>
    </lineage>
</organism>
<feature type="chain" id="PRO_1000213686" description="Chaperone protein DnaJ">
    <location>
        <begin position="1"/>
        <end position="371"/>
    </location>
</feature>
<feature type="domain" description="J" evidence="1">
    <location>
        <begin position="5"/>
        <end position="69"/>
    </location>
</feature>
<feature type="repeat" description="CXXCXGXG motif">
    <location>
        <begin position="140"/>
        <end position="147"/>
    </location>
</feature>
<feature type="repeat" description="CXXCXGXG motif">
    <location>
        <begin position="157"/>
        <end position="164"/>
    </location>
</feature>
<feature type="repeat" description="CXXCXGXG motif">
    <location>
        <begin position="179"/>
        <end position="186"/>
    </location>
</feature>
<feature type="repeat" description="CXXCXGXG motif">
    <location>
        <begin position="193"/>
        <end position="200"/>
    </location>
</feature>
<feature type="zinc finger region" description="CR-type" evidence="1">
    <location>
        <begin position="127"/>
        <end position="205"/>
    </location>
</feature>
<feature type="binding site" evidence="1">
    <location>
        <position position="140"/>
    </location>
    <ligand>
        <name>Zn(2+)</name>
        <dbReference type="ChEBI" id="CHEBI:29105"/>
        <label>1</label>
    </ligand>
</feature>
<feature type="binding site" evidence="1">
    <location>
        <position position="143"/>
    </location>
    <ligand>
        <name>Zn(2+)</name>
        <dbReference type="ChEBI" id="CHEBI:29105"/>
        <label>1</label>
    </ligand>
</feature>
<feature type="binding site" evidence="1">
    <location>
        <position position="157"/>
    </location>
    <ligand>
        <name>Zn(2+)</name>
        <dbReference type="ChEBI" id="CHEBI:29105"/>
        <label>2</label>
    </ligand>
</feature>
<feature type="binding site" evidence="1">
    <location>
        <position position="160"/>
    </location>
    <ligand>
        <name>Zn(2+)</name>
        <dbReference type="ChEBI" id="CHEBI:29105"/>
        <label>2</label>
    </ligand>
</feature>
<feature type="binding site" evidence="1">
    <location>
        <position position="179"/>
    </location>
    <ligand>
        <name>Zn(2+)</name>
        <dbReference type="ChEBI" id="CHEBI:29105"/>
        <label>2</label>
    </ligand>
</feature>
<feature type="binding site" evidence="1">
    <location>
        <position position="182"/>
    </location>
    <ligand>
        <name>Zn(2+)</name>
        <dbReference type="ChEBI" id="CHEBI:29105"/>
        <label>2</label>
    </ligand>
</feature>
<feature type="binding site" evidence="1">
    <location>
        <position position="193"/>
    </location>
    <ligand>
        <name>Zn(2+)</name>
        <dbReference type="ChEBI" id="CHEBI:29105"/>
        <label>1</label>
    </ligand>
</feature>
<feature type="binding site" evidence="1">
    <location>
        <position position="196"/>
    </location>
    <ligand>
        <name>Zn(2+)</name>
        <dbReference type="ChEBI" id="CHEBI:29105"/>
        <label>1</label>
    </ligand>
</feature>
<gene>
    <name evidence="1" type="primary">dnaJ</name>
    <name type="ordered locus">HDEF_0371</name>
</gene>
<name>DNAJ_HAMD5</name>
<comment type="function">
    <text evidence="1">Participates actively in the response to hyperosmotic and heat shock by preventing the aggregation of stress-denatured proteins and by disaggregating proteins, also in an autonomous, DnaK-independent fashion. Unfolded proteins bind initially to DnaJ; upon interaction with the DnaJ-bound protein, DnaK hydrolyzes its bound ATP, resulting in the formation of a stable complex. GrpE releases ADP from DnaK; ATP binding to DnaK triggers the release of the substrate protein, thus completing the reaction cycle. Several rounds of ATP-dependent interactions between DnaJ, DnaK and GrpE are required for fully efficient folding. Also involved, together with DnaK and GrpE, in the DNA replication of plasmids through activation of initiation proteins.</text>
</comment>
<comment type="cofactor">
    <cofactor evidence="1">
        <name>Zn(2+)</name>
        <dbReference type="ChEBI" id="CHEBI:29105"/>
    </cofactor>
    <text evidence="1">Binds 2 Zn(2+) ions per monomer.</text>
</comment>
<comment type="subunit">
    <text evidence="1">Homodimer.</text>
</comment>
<comment type="subcellular location">
    <subcellularLocation>
        <location evidence="1">Cytoplasm</location>
    </subcellularLocation>
</comment>
<comment type="domain">
    <text evidence="1">The J domain is necessary and sufficient to stimulate DnaK ATPase activity. Zinc center 1 plays an important role in the autonomous, DnaK-independent chaperone activity of DnaJ. Zinc center 2 is essential for interaction with DnaK and for DnaJ activity.</text>
</comment>
<comment type="similarity">
    <text evidence="1">Belongs to the DnaJ family.</text>
</comment>
<keyword id="KW-0143">Chaperone</keyword>
<keyword id="KW-0963">Cytoplasm</keyword>
<keyword id="KW-0235">DNA replication</keyword>
<keyword id="KW-0479">Metal-binding</keyword>
<keyword id="KW-0677">Repeat</keyword>
<keyword id="KW-0346">Stress response</keyword>
<keyword id="KW-0862">Zinc</keyword>
<keyword id="KW-0863">Zinc-finger</keyword>
<dbReference type="EMBL" id="CP001277">
    <property type="protein sequence ID" value="ACQ67128.1"/>
    <property type="molecule type" value="Genomic_DNA"/>
</dbReference>
<dbReference type="RefSeq" id="WP_012738088.1">
    <property type="nucleotide sequence ID" value="NC_012751.1"/>
</dbReference>
<dbReference type="SMR" id="C4K3I5"/>
<dbReference type="STRING" id="572265.HDEF_0371"/>
<dbReference type="GeneID" id="66260281"/>
<dbReference type="KEGG" id="hde:HDEF_0371"/>
<dbReference type="eggNOG" id="COG0484">
    <property type="taxonomic scope" value="Bacteria"/>
</dbReference>
<dbReference type="HOGENOM" id="CLU_017633_0_7_6"/>
<dbReference type="Proteomes" id="UP000002334">
    <property type="component" value="Chromosome"/>
</dbReference>
<dbReference type="GO" id="GO:0005737">
    <property type="term" value="C:cytoplasm"/>
    <property type="evidence" value="ECO:0007669"/>
    <property type="project" value="UniProtKB-SubCell"/>
</dbReference>
<dbReference type="GO" id="GO:0005524">
    <property type="term" value="F:ATP binding"/>
    <property type="evidence" value="ECO:0007669"/>
    <property type="project" value="InterPro"/>
</dbReference>
<dbReference type="GO" id="GO:0031072">
    <property type="term" value="F:heat shock protein binding"/>
    <property type="evidence" value="ECO:0007669"/>
    <property type="project" value="InterPro"/>
</dbReference>
<dbReference type="GO" id="GO:0051082">
    <property type="term" value="F:unfolded protein binding"/>
    <property type="evidence" value="ECO:0007669"/>
    <property type="project" value="UniProtKB-UniRule"/>
</dbReference>
<dbReference type="GO" id="GO:0008270">
    <property type="term" value="F:zinc ion binding"/>
    <property type="evidence" value="ECO:0007669"/>
    <property type="project" value="UniProtKB-UniRule"/>
</dbReference>
<dbReference type="GO" id="GO:0051085">
    <property type="term" value="P:chaperone cofactor-dependent protein refolding"/>
    <property type="evidence" value="ECO:0007669"/>
    <property type="project" value="TreeGrafter"/>
</dbReference>
<dbReference type="GO" id="GO:0006260">
    <property type="term" value="P:DNA replication"/>
    <property type="evidence" value="ECO:0007669"/>
    <property type="project" value="UniProtKB-KW"/>
</dbReference>
<dbReference type="GO" id="GO:0042026">
    <property type="term" value="P:protein refolding"/>
    <property type="evidence" value="ECO:0007669"/>
    <property type="project" value="TreeGrafter"/>
</dbReference>
<dbReference type="GO" id="GO:0009408">
    <property type="term" value="P:response to heat"/>
    <property type="evidence" value="ECO:0007669"/>
    <property type="project" value="InterPro"/>
</dbReference>
<dbReference type="CDD" id="cd06257">
    <property type="entry name" value="DnaJ"/>
    <property type="match status" value="1"/>
</dbReference>
<dbReference type="CDD" id="cd10747">
    <property type="entry name" value="DnaJ_C"/>
    <property type="match status" value="1"/>
</dbReference>
<dbReference type="CDD" id="cd10719">
    <property type="entry name" value="DnaJ_zf"/>
    <property type="match status" value="1"/>
</dbReference>
<dbReference type="FunFam" id="1.10.287.110:FF:000034">
    <property type="entry name" value="Chaperone protein DnaJ"/>
    <property type="match status" value="1"/>
</dbReference>
<dbReference type="FunFam" id="2.10.230.10:FF:000002">
    <property type="entry name" value="Molecular chaperone DnaJ"/>
    <property type="match status" value="1"/>
</dbReference>
<dbReference type="FunFam" id="2.60.260.20:FF:000004">
    <property type="entry name" value="Molecular chaperone DnaJ"/>
    <property type="match status" value="1"/>
</dbReference>
<dbReference type="Gene3D" id="1.10.287.110">
    <property type="entry name" value="DnaJ domain"/>
    <property type="match status" value="1"/>
</dbReference>
<dbReference type="Gene3D" id="2.10.230.10">
    <property type="entry name" value="Heat shock protein DnaJ, cysteine-rich domain"/>
    <property type="match status" value="1"/>
</dbReference>
<dbReference type="Gene3D" id="2.60.260.20">
    <property type="entry name" value="Urease metallochaperone UreE, N-terminal domain"/>
    <property type="match status" value="2"/>
</dbReference>
<dbReference type="HAMAP" id="MF_01152">
    <property type="entry name" value="DnaJ"/>
    <property type="match status" value="1"/>
</dbReference>
<dbReference type="InterPro" id="IPR012724">
    <property type="entry name" value="DnaJ"/>
</dbReference>
<dbReference type="InterPro" id="IPR002939">
    <property type="entry name" value="DnaJ_C"/>
</dbReference>
<dbReference type="InterPro" id="IPR001623">
    <property type="entry name" value="DnaJ_domain"/>
</dbReference>
<dbReference type="InterPro" id="IPR018253">
    <property type="entry name" value="DnaJ_domain_CS"/>
</dbReference>
<dbReference type="InterPro" id="IPR008971">
    <property type="entry name" value="HSP40/DnaJ_pept-bd"/>
</dbReference>
<dbReference type="InterPro" id="IPR001305">
    <property type="entry name" value="HSP_DnaJ_Cys-rich_dom"/>
</dbReference>
<dbReference type="InterPro" id="IPR036410">
    <property type="entry name" value="HSP_DnaJ_Cys-rich_dom_sf"/>
</dbReference>
<dbReference type="InterPro" id="IPR036869">
    <property type="entry name" value="J_dom_sf"/>
</dbReference>
<dbReference type="NCBIfam" id="TIGR02349">
    <property type="entry name" value="DnaJ_bact"/>
    <property type="match status" value="1"/>
</dbReference>
<dbReference type="NCBIfam" id="NF008035">
    <property type="entry name" value="PRK10767.1"/>
    <property type="match status" value="1"/>
</dbReference>
<dbReference type="PANTHER" id="PTHR43096:SF48">
    <property type="entry name" value="CHAPERONE PROTEIN DNAJ"/>
    <property type="match status" value="1"/>
</dbReference>
<dbReference type="PANTHER" id="PTHR43096">
    <property type="entry name" value="DNAJ HOMOLOG 1, MITOCHONDRIAL-RELATED"/>
    <property type="match status" value="1"/>
</dbReference>
<dbReference type="Pfam" id="PF00226">
    <property type="entry name" value="DnaJ"/>
    <property type="match status" value="1"/>
</dbReference>
<dbReference type="Pfam" id="PF01556">
    <property type="entry name" value="DnaJ_C"/>
    <property type="match status" value="1"/>
</dbReference>
<dbReference type="Pfam" id="PF00684">
    <property type="entry name" value="DnaJ_CXXCXGXG"/>
    <property type="match status" value="1"/>
</dbReference>
<dbReference type="PRINTS" id="PR00625">
    <property type="entry name" value="JDOMAIN"/>
</dbReference>
<dbReference type="SMART" id="SM00271">
    <property type="entry name" value="DnaJ"/>
    <property type="match status" value="1"/>
</dbReference>
<dbReference type="SUPFAM" id="SSF46565">
    <property type="entry name" value="Chaperone J-domain"/>
    <property type="match status" value="1"/>
</dbReference>
<dbReference type="SUPFAM" id="SSF57938">
    <property type="entry name" value="DnaJ/Hsp40 cysteine-rich domain"/>
    <property type="match status" value="1"/>
</dbReference>
<dbReference type="SUPFAM" id="SSF49493">
    <property type="entry name" value="HSP40/DnaJ peptide-binding domain"/>
    <property type="match status" value="2"/>
</dbReference>
<dbReference type="PROSITE" id="PS00636">
    <property type="entry name" value="DNAJ_1"/>
    <property type="match status" value="1"/>
</dbReference>
<dbReference type="PROSITE" id="PS50076">
    <property type="entry name" value="DNAJ_2"/>
    <property type="match status" value="1"/>
</dbReference>
<dbReference type="PROSITE" id="PS51188">
    <property type="entry name" value="ZF_CR"/>
    <property type="match status" value="1"/>
</dbReference>
<evidence type="ECO:0000255" key="1">
    <source>
        <dbReference type="HAMAP-Rule" id="MF_01152"/>
    </source>
</evidence>
<sequence>MSKKDYYEILGIAKNANEQDIKDAYKRLAKKYHPDRNKDKDAETKFKEMKEAYEVLSDQQKRAAYDQHGHTAFEQSGMGGGFHNSSNFSNVFNDVFSDFFGGHQQRTQRGRDLRYTLNLTLEEAVRGASKEIHITTLVHCEHCKGSGAKQGTRPVTCTTCRGVGEVHMQQGFFTIQQTCPRCHGQGQMIKDPCRQCRGQGKVEEPKTFSVKVPAGIDSNDCLRLNGKGEVGEMGAPSGDLYVQIHVDRHHIFERSKNNLYCKVPINFTTAALGGEIEVPTLDGAIKLKIPPETQTGQCFRIPNKGIKPEKKTPGDLFCTVFIETPVHLNEKQKKLLRDLDQSFCETSSKKNTPETKKFLESMKKFFDNLTH</sequence>
<accession>C4K3I5</accession>
<reference key="1">
    <citation type="journal article" date="2009" name="Proc. Natl. Acad. Sci. U.S.A.">
        <title>Hamiltonella defensa, genome evolution of protective bacterial endosymbiont from pathogenic ancestors.</title>
        <authorList>
            <person name="Degnan P.H."/>
            <person name="Yu Y."/>
            <person name="Sisneros N."/>
            <person name="Wing R.A."/>
            <person name="Moran N.A."/>
        </authorList>
    </citation>
    <scope>NUCLEOTIDE SEQUENCE [LARGE SCALE GENOMIC DNA]</scope>
    <source>
        <strain>5AT</strain>
    </source>
</reference>